<name>PEPX_PEDPA</name>
<sequence>MKNNQFGRIRLDRTTELEELKNIHFIDADLLADPKAQLKDFLKRSCLVSNSEATFQQKLSNLLATPDQTMAAFFESDQPLTLEIFILLELQLLQFEADTDYQIEDPLSAISKIQLPELDLKNFETSADVAHAWYNLLTTHTKNGEVYLDRLTQQGYFVSFYPTTTKPLFFNGKAQAVFDPHQLIREVVYVEAPLDTDHDGQRDLLKAEILRPAQTAHGYQAPVLYTASPYNQGTNDSYGEAITHNVDVPLTEKAVQKISKSDVTAEPFSQTLPAERKVAGMATKASETFAREQPYTLNNYFLSRGFAVVYAAGIGTRDSDGLRDTGSVEETISTTAIIEWLAGNRRAFTNKTDNLEIKASWSNHKIAMTGRSYLGTLATAAATTGVEGLETIISEAAISSWYDYYRDGGLVAAPDTFQGEDMDVLAAEVLSRKHDAGDYLGIKAHFDQILKRIEKDQDRDSGNYSKYWDSKNYLNNVKNIKADIIMVHGLNDWNVKPRNVGKLWNAVRDLPINKKIILHQGQHIYINAFRSIDFTDMMNLWLSYKLFDVQNGANEVLPNVIIQDNVEPETWNTYQDWQAADDEIREFTLQAKTLVDRASETKNEAASFRDSLDPEFFEMYKNDLKHWHTDLLNTEHATNGKNQMRNNRLIFKTAQTKEDWLIDGTPEVSVNVAVNQPFGMLSFQLVDFGDAKRLNPSPSILQPRSLSGSFDWRTDDLREFTLQNAVTPWKMISKGHINLQNRTNNYCVDEVKPHQFYDVKLELQPTFYRLLAGHQLGLVIYATDFETTIRGNQELLYSLQLNQSHLKIKLAH</sequence>
<feature type="chain" id="PRO_1000045485" description="Xaa-Pro dipeptidyl-peptidase">
    <location>
        <begin position="1"/>
        <end position="812"/>
    </location>
</feature>
<feature type="active site" description="Charge relay system" evidence="1">
    <location>
        <position position="372"/>
    </location>
</feature>
<feature type="active site" description="Charge relay system" evidence="1">
    <location>
        <position position="492"/>
    </location>
</feature>
<feature type="active site" description="Charge relay system" evidence="1">
    <location>
        <position position="523"/>
    </location>
</feature>
<organism>
    <name type="scientific">Pediococcus pentosaceus (strain ATCC 25745 / CCUG 21536 / LMG 10740 / 183-1w)</name>
    <dbReference type="NCBI Taxonomy" id="278197"/>
    <lineage>
        <taxon>Bacteria</taxon>
        <taxon>Bacillati</taxon>
        <taxon>Bacillota</taxon>
        <taxon>Bacilli</taxon>
        <taxon>Lactobacillales</taxon>
        <taxon>Lactobacillaceae</taxon>
        <taxon>Pediococcus</taxon>
    </lineage>
</organism>
<dbReference type="EC" id="3.4.14.11" evidence="1"/>
<dbReference type="EMBL" id="CP000422">
    <property type="protein sequence ID" value="ABJ67476.1"/>
    <property type="molecule type" value="Genomic_DNA"/>
</dbReference>
<dbReference type="RefSeq" id="WP_002832821.1">
    <property type="nucleotide sequence ID" value="NC_008525.1"/>
</dbReference>
<dbReference type="SMR" id="Q03H46"/>
<dbReference type="STRING" id="278197.PEPE_0380"/>
<dbReference type="ESTHER" id="pedpa-pepx">
    <property type="family name" value="Lactobacillus_peptidase"/>
</dbReference>
<dbReference type="GeneID" id="33062624"/>
<dbReference type="KEGG" id="ppe:PEPE_0380"/>
<dbReference type="eggNOG" id="COG2936">
    <property type="taxonomic scope" value="Bacteria"/>
</dbReference>
<dbReference type="HOGENOM" id="CLU_011800_0_0_9"/>
<dbReference type="OrthoDB" id="319764at2"/>
<dbReference type="Proteomes" id="UP000000773">
    <property type="component" value="Chromosome"/>
</dbReference>
<dbReference type="GO" id="GO:0005737">
    <property type="term" value="C:cytoplasm"/>
    <property type="evidence" value="ECO:0007669"/>
    <property type="project" value="UniProtKB-SubCell"/>
</dbReference>
<dbReference type="GO" id="GO:0004177">
    <property type="term" value="F:aminopeptidase activity"/>
    <property type="evidence" value="ECO:0007669"/>
    <property type="project" value="UniProtKB-KW"/>
</dbReference>
<dbReference type="GO" id="GO:0008239">
    <property type="term" value="F:dipeptidyl-peptidase activity"/>
    <property type="evidence" value="ECO:0007669"/>
    <property type="project" value="UniProtKB-UniRule"/>
</dbReference>
<dbReference type="GO" id="GO:0008236">
    <property type="term" value="F:serine-type peptidase activity"/>
    <property type="evidence" value="ECO:0007669"/>
    <property type="project" value="UniProtKB-KW"/>
</dbReference>
<dbReference type="GO" id="GO:0006508">
    <property type="term" value="P:proteolysis"/>
    <property type="evidence" value="ECO:0007669"/>
    <property type="project" value="UniProtKB-KW"/>
</dbReference>
<dbReference type="Gene3D" id="1.10.246.70">
    <property type="match status" value="1"/>
</dbReference>
<dbReference type="Gene3D" id="3.40.50.1820">
    <property type="entry name" value="alpha/beta hydrolase"/>
    <property type="match status" value="1"/>
</dbReference>
<dbReference type="Gene3D" id="2.60.120.260">
    <property type="entry name" value="Galactose-binding domain-like"/>
    <property type="match status" value="1"/>
</dbReference>
<dbReference type="HAMAP" id="MF_00698">
    <property type="entry name" value="Aminopeptidase_S15"/>
    <property type="match status" value="1"/>
</dbReference>
<dbReference type="InterPro" id="IPR029058">
    <property type="entry name" value="AB_hydrolase_fold"/>
</dbReference>
<dbReference type="InterPro" id="IPR008979">
    <property type="entry name" value="Galactose-bd-like_sf"/>
</dbReference>
<dbReference type="InterPro" id="IPR008252">
    <property type="entry name" value="Pept_S15_Xpro"/>
</dbReference>
<dbReference type="InterPro" id="IPR015251">
    <property type="entry name" value="PepX_N_dom"/>
</dbReference>
<dbReference type="InterPro" id="IPR036313">
    <property type="entry name" value="PepX_N_dom_sf"/>
</dbReference>
<dbReference type="InterPro" id="IPR000383">
    <property type="entry name" value="Xaa-Pro-like_dom"/>
</dbReference>
<dbReference type="InterPro" id="IPR013736">
    <property type="entry name" value="Xaa-Pro_dipept_C"/>
</dbReference>
<dbReference type="NCBIfam" id="NF003781">
    <property type="entry name" value="PRK05371.1-2"/>
    <property type="match status" value="1"/>
</dbReference>
<dbReference type="Pfam" id="PF02129">
    <property type="entry name" value="Peptidase_S15"/>
    <property type="match status" value="1"/>
</dbReference>
<dbReference type="Pfam" id="PF08530">
    <property type="entry name" value="PepX_C"/>
    <property type="match status" value="1"/>
</dbReference>
<dbReference type="Pfam" id="PF09168">
    <property type="entry name" value="PepX_N"/>
    <property type="match status" value="1"/>
</dbReference>
<dbReference type="PRINTS" id="PR00923">
    <property type="entry name" value="LACTOPTASE"/>
</dbReference>
<dbReference type="SMART" id="SM00939">
    <property type="entry name" value="PepX_C"/>
    <property type="match status" value="1"/>
</dbReference>
<dbReference type="SMART" id="SM00940">
    <property type="entry name" value="PepX_N"/>
    <property type="match status" value="1"/>
</dbReference>
<dbReference type="SUPFAM" id="SSF53474">
    <property type="entry name" value="alpha/beta-Hydrolases"/>
    <property type="match status" value="1"/>
</dbReference>
<dbReference type="SUPFAM" id="SSF49785">
    <property type="entry name" value="Galactose-binding domain-like"/>
    <property type="match status" value="1"/>
</dbReference>
<dbReference type="SUPFAM" id="SSF81761">
    <property type="entry name" value="X-Prolyl dipeptidyl aminopeptidase PepX, N-terminal domain"/>
    <property type="match status" value="1"/>
</dbReference>
<evidence type="ECO:0000255" key="1">
    <source>
        <dbReference type="HAMAP-Rule" id="MF_00698"/>
    </source>
</evidence>
<comment type="function">
    <text evidence="1">Removes N-terminal dipeptides sequentially from polypeptides having unsubstituted N-termini provided that the penultimate residue is proline.</text>
</comment>
<comment type="catalytic activity">
    <reaction evidence="1">
        <text>Hydrolyzes Xaa-Pro-|- bonds to release unblocked, N-terminal dipeptides from substrates including Ala-Pro-|-p-nitroanilide and (sequentially) Tyr-Pro-|-Phe-Pro-|-Gly-Pro-|-Ile.</text>
        <dbReference type="EC" id="3.4.14.11"/>
    </reaction>
</comment>
<comment type="subunit">
    <text evidence="1">Homodimer.</text>
</comment>
<comment type="subcellular location">
    <subcellularLocation>
        <location evidence="1">Cytoplasm</location>
    </subcellularLocation>
</comment>
<comment type="similarity">
    <text evidence="1">Belongs to the peptidase S15 family.</text>
</comment>
<accession>Q03H46</accession>
<reference key="1">
    <citation type="journal article" date="2006" name="Proc. Natl. Acad. Sci. U.S.A.">
        <title>Comparative genomics of the lactic acid bacteria.</title>
        <authorList>
            <person name="Makarova K.S."/>
            <person name="Slesarev A."/>
            <person name="Wolf Y.I."/>
            <person name="Sorokin A."/>
            <person name="Mirkin B."/>
            <person name="Koonin E.V."/>
            <person name="Pavlov A."/>
            <person name="Pavlova N."/>
            <person name="Karamychev V."/>
            <person name="Polouchine N."/>
            <person name="Shakhova V."/>
            <person name="Grigoriev I."/>
            <person name="Lou Y."/>
            <person name="Rohksar D."/>
            <person name="Lucas S."/>
            <person name="Huang K."/>
            <person name="Goodstein D.M."/>
            <person name="Hawkins T."/>
            <person name="Plengvidhya V."/>
            <person name="Welker D."/>
            <person name="Hughes J."/>
            <person name="Goh Y."/>
            <person name="Benson A."/>
            <person name="Baldwin K."/>
            <person name="Lee J.-H."/>
            <person name="Diaz-Muniz I."/>
            <person name="Dosti B."/>
            <person name="Smeianov V."/>
            <person name="Wechter W."/>
            <person name="Barabote R."/>
            <person name="Lorca G."/>
            <person name="Altermann E."/>
            <person name="Barrangou R."/>
            <person name="Ganesan B."/>
            <person name="Xie Y."/>
            <person name="Rawsthorne H."/>
            <person name="Tamir D."/>
            <person name="Parker C."/>
            <person name="Breidt F."/>
            <person name="Broadbent J.R."/>
            <person name="Hutkins R."/>
            <person name="O'Sullivan D."/>
            <person name="Steele J."/>
            <person name="Unlu G."/>
            <person name="Saier M.H. Jr."/>
            <person name="Klaenhammer T."/>
            <person name="Richardson P."/>
            <person name="Kozyavkin S."/>
            <person name="Weimer B.C."/>
            <person name="Mills D.A."/>
        </authorList>
    </citation>
    <scope>NUCLEOTIDE SEQUENCE [LARGE SCALE GENOMIC DNA]</scope>
    <source>
        <strain>ATCC 25745 / CCUG 21536 / LMG 10740 / 183-1w</strain>
    </source>
</reference>
<gene>
    <name evidence="1" type="primary">pepX</name>
    <name type="ordered locus">PEPE_0380</name>
</gene>
<proteinExistence type="inferred from homology"/>
<keyword id="KW-0031">Aminopeptidase</keyword>
<keyword id="KW-0963">Cytoplasm</keyword>
<keyword id="KW-0378">Hydrolase</keyword>
<keyword id="KW-0645">Protease</keyword>
<keyword id="KW-0720">Serine protease</keyword>
<protein>
    <recommendedName>
        <fullName evidence="1">Xaa-Pro dipeptidyl-peptidase</fullName>
        <ecNumber evidence="1">3.4.14.11</ecNumber>
    </recommendedName>
    <alternativeName>
        <fullName evidence="1">X-Pro dipeptidyl-peptidase</fullName>
    </alternativeName>
    <alternativeName>
        <fullName evidence="1">X-prolyl-dipeptidyl aminopeptidase</fullName>
        <shortName evidence="1">X-PDAP</shortName>
    </alternativeName>
</protein>